<comment type="function">
    <text evidence="1">Functions in the biosynthesis of branched-chain amino acids. Catalyzes the dehydration of (2R,3R)-2,3-dihydroxy-3-methylpentanoate (2,3-dihydroxy-3-methylvalerate) into 2-oxo-3-methylpentanoate (2-oxo-3-methylvalerate) and of (2R)-2,3-dihydroxy-3-methylbutanoate (2,3-dihydroxyisovalerate) into 2-oxo-3-methylbutanoate (2-oxoisovalerate), the penultimate precursor to L-isoleucine and L-valine, respectively.</text>
</comment>
<comment type="catalytic activity">
    <reaction evidence="1">
        <text>(2R)-2,3-dihydroxy-3-methylbutanoate = 3-methyl-2-oxobutanoate + H2O</text>
        <dbReference type="Rhea" id="RHEA:24809"/>
        <dbReference type="ChEBI" id="CHEBI:11851"/>
        <dbReference type="ChEBI" id="CHEBI:15377"/>
        <dbReference type="ChEBI" id="CHEBI:49072"/>
        <dbReference type="EC" id="4.2.1.9"/>
    </reaction>
    <physiologicalReaction direction="left-to-right" evidence="1">
        <dbReference type="Rhea" id="RHEA:24810"/>
    </physiologicalReaction>
</comment>
<comment type="catalytic activity">
    <reaction evidence="1">
        <text>(2R,3R)-2,3-dihydroxy-3-methylpentanoate = (S)-3-methyl-2-oxopentanoate + H2O</text>
        <dbReference type="Rhea" id="RHEA:27694"/>
        <dbReference type="ChEBI" id="CHEBI:15377"/>
        <dbReference type="ChEBI" id="CHEBI:35146"/>
        <dbReference type="ChEBI" id="CHEBI:49258"/>
        <dbReference type="EC" id="4.2.1.9"/>
    </reaction>
    <physiologicalReaction direction="left-to-right" evidence="1">
        <dbReference type="Rhea" id="RHEA:27695"/>
    </physiologicalReaction>
</comment>
<comment type="cofactor">
    <cofactor evidence="1">
        <name>[2Fe-2S] cluster</name>
        <dbReference type="ChEBI" id="CHEBI:190135"/>
    </cofactor>
    <text evidence="1">Binds 1 [2Fe-2S] cluster per subunit. This cluster acts as a Lewis acid cofactor.</text>
</comment>
<comment type="cofactor">
    <cofactor evidence="1">
        <name>Mg(2+)</name>
        <dbReference type="ChEBI" id="CHEBI:18420"/>
    </cofactor>
</comment>
<comment type="pathway">
    <text evidence="1">Amino-acid biosynthesis; L-isoleucine biosynthesis; L-isoleucine from 2-oxobutanoate: step 3/4.</text>
</comment>
<comment type="pathway">
    <text evidence="1">Amino-acid biosynthesis; L-valine biosynthesis; L-valine from pyruvate: step 3/4.</text>
</comment>
<comment type="subunit">
    <text evidence="1">Homodimer.</text>
</comment>
<comment type="similarity">
    <text evidence="1">Belongs to the IlvD/Edd family.</text>
</comment>
<feature type="chain" id="PRO_1000057095" description="Dihydroxy-acid dehydratase">
    <location>
        <begin position="1"/>
        <end position="558"/>
    </location>
</feature>
<feature type="active site" description="Proton acceptor" evidence="1">
    <location>
        <position position="473"/>
    </location>
</feature>
<feature type="binding site" evidence="1">
    <location>
        <position position="81"/>
    </location>
    <ligand>
        <name>Mg(2+)</name>
        <dbReference type="ChEBI" id="CHEBI:18420"/>
    </ligand>
</feature>
<feature type="binding site" evidence="1">
    <location>
        <position position="122"/>
    </location>
    <ligand>
        <name>[2Fe-2S] cluster</name>
        <dbReference type="ChEBI" id="CHEBI:190135"/>
    </ligand>
</feature>
<feature type="binding site" evidence="1">
    <location>
        <position position="123"/>
    </location>
    <ligand>
        <name>Mg(2+)</name>
        <dbReference type="ChEBI" id="CHEBI:18420"/>
    </ligand>
</feature>
<feature type="binding site" description="via carbamate group" evidence="1">
    <location>
        <position position="124"/>
    </location>
    <ligand>
        <name>Mg(2+)</name>
        <dbReference type="ChEBI" id="CHEBI:18420"/>
    </ligand>
</feature>
<feature type="binding site" evidence="1">
    <location>
        <position position="195"/>
    </location>
    <ligand>
        <name>[2Fe-2S] cluster</name>
        <dbReference type="ChEBI" id="CHEBI:190135"/>
    </ligand>
</feature>
<feature type="binding site" evidence="1">
    <location>
        <position position="447"/>
    </location>
    <ligand>
        <name>Mg(2+)</name>
        <dbReference type="ChEBI" id="CHEBI:18420"/>
    </ligand>
</feature>
<feature type="modified residue" description="N6-carboxylysine" evidence="1">
    <location>
        <position position="124"/>
    </location>
</feature>
<gene>
    <name evidence="1" type="primary">ilvD</name>
    <name type="ordered locus">BPUM_1922</name>
</gene>
<evidence type="ECO:0000255" key="1">
    <source>
        <dbReference type="HAMAP-Rule" id="MF_00012"/>
    </source>
</evidence>
<protein>
    <recommendedName>
        <fullName evidence="1">Dihydroxy-acid dehydratase</fullName>
        <shortName evidence="1">DAD</shortName>
        <ecNumber evidence="1">4.2.1.9</ecNumber>
    </recommendedName>
</protein>
<dbReference type="EC" id="4.2.1.9" evidence="1"/>
<dbReference type="EMBL" id="CP000813">
    <property type="protein sequence ID" value="ABV62592.1"/>
    <property type="molecule type" value="Genomic_DNA"/>
</dbReference>
<dbReference type="RefSeq" id="WP_012010311.1">
    <property type="nucleotide sequence ID" value="NZ_VEIS01000001.1"/>
</dbReference>
<dbReference type="SMR" id="A8FEC5"/>
<dbReference type="STRING" id="315750.BPUM_1922"/>
<dbReference type="GeneID" id="5621185"/>
<dbReference type="KEGG" id="bpu:BPUM_1922"/>
<dbReference type="eggNOG" id="COG0129">
    <property type="taxonomic scope" value="Bacteria"/>
</dbReference>
<dbReference type="HOGENOM" id="CLU_014271_4_2_9"/>
<dbReference type="OrthoDB" id="9807077at2"/>
<dbReference type="UniPathway" id="UPA00047">
    <property type="reaction ID" value="UER00057"/>
</dbReference>
<dbReference type="UniPathway" id="UPA00049">
    <property type="reaction ID" value="UER00061"/>
</dbReference>
<dbReference type="Proteomes" id="UP000001355">
    <property type="component" value="Chromosome"/>
</dbReference>
<dbReference type="GO" id="GO:0005829">
    <property type="term" value="C:cytosol"/>
    <property type="evidence" value="ECO:0007669"/>
    <property type="project" value="TreeGrafter"/>
</dbReference>
<dbReference type="GO" id="GO:0051537">
    <property type="term" value="F:2 iron, 2 sulfur cluster binding"/>
    <property type="evidence" value="ECO:0007669"/>
    <property type="project" value="UniProtKB-UniRule"/>
</dbReference>
<dbReference type="GO" id="GO:0004160">
    <property type="term" value="F:dihydroxy-acid dehydratase activity"/>
    <property type="evidence" value="ECO:0007669"/>
    <property type="project" value="UniProtKB-UniRule"/>
</dbReference>
<dbReference type="GO" id="GO:0000287">
    <property type="term" value="F:magnesium ion binding"/>
    <property type="evidence" value="ECO:0007669"/>
    <property type="project" value="UniProtKB-UniRule"/>
</dbReference>
<dbReference type="GO" id="GO:0009097">
    <property type="term" value="P:isoleucine biosynthetic process"/>
    <property type="evidence" value="ECO:0007669"/>
    <property type="project" value="UniProtKB-UniRule"/>
</dbReference>
<dbReference type="GO" id="GO:0009099">
    <property type="term" value="P:L-valine biosynthetic process"/>
    <property type="evidence" value="ECO:0007669"/>
    <property type="project" value="UniProtKB-UniRule"/>
</dbReference>
<dbReference type="FunFam" id="3.50.30.80:FF:000001">
    <property type="entry name" value="Dihydroxy-acid dehydratase"/>
    <property type="match status" value="1"/>
</dbReference>
<dbReference type="Gene3D" id="3.50.30.80">
    <property type="entry name" value="IlvD/EDD C-terminal domain-like"/>
    <property type="match status" value="1"/>
</dbReference>
<dbReference type="HAMAP" id="MF_00012">
    <property type="entry name" value="IlvD"/>
    <property type="match status" value="1"/>
</dbReference>
<dbReference type="InterPro" id="IPR042096">
    <property type="entry name" value="Dihydro-acid_dehy_C"/>
</dbReference>
<dbReference type="InterPro" id="IPR004404">
    <property type="entry name" value="DihydroxyA_deHydtase"/>
</dbReference>
<dbReference type="InterPro" id="IPR020558">
    <property type="entry name" value="DiOHA_6PGluconate_deHydtase_CS"/>
</dbReference>
<dbReference type="InterPro" id="IPR056740">
    <property type="entry name" value="ILV_EDD_C"/>
</dbReference>
<dbReference type="InterPro" id="IPR000581">
    <property type="entry name" value="ILV_EDD_N"/>
</dbReference>
<dbReference type="InterPro" id="IPR037237">
    <property type="entry name" value="IlvD/EDD_N"/>
</dbReference>
<dbReference type="NCBIfam" id="TIGR00110">
    <property type="entry name" value="ilvD"/>
    <property type="match status" value="1"/>
</dbReference>
<dbReference type="NCBIfam" id="NF002068">
    <property type="entry name" value="PRK00911.1"/>
    <property type="match status" value="1"/>
</dbReference>
<dbReference type="PANTHER" id="PTHR43661">
    <property type="entry name" value="D-XYLONATE DEHYDRATASE"/>
    <property type="match status" value="1"/>
</dbReference>
<dbReference type="PANTHER" id="PTHR43661:SF3">
    <property type="entry name" value="D-XYLONATE DEHYDRATASE YAGF-RELATED"/>
    <property type="match status" value="1"/>
</dbReference>
<dbReference type="Pfam" id="PF24877">
    <property type="entry name" value="ILV_EDD_C"/>
    <property type="match status" value="1"/>
</dbReference>
<dbReference type="Pfam" id="PF00920">
    <property type="entry name" value="ILVD_EDD_N"/>
    <property type="match status" value="1"/>
</dbReference>
<dbReference type="SUPFAM" id="SSF143975">
    <property type="entry name" value="IlvD/EDD N-terminal domain-like"/>
    <property type="match status" value="1"/>
</dbReference>
<dbReference type="SUPFAM" id="SSF52016">
    <property type="entry name" value="LeuD/IlvD-like"/>
    <property type="match status" value="1"/>
</dbReference>
<dbReference type="PROSITE" id="PS00886">
    <property type="entry name" value="ILVD_EDD_1"/>
    <property type="match status" value="1"/>
</dbReference>
<dbReference type="PROSITE" id="PS00887">
    <property type="entry name" value="ILVD_EDD_2"/>
    <property type="match status" value="1"/>
</dbReference>
<proteinExistence type="inferred from homology"/>
<accession>A8FEC5</accession>
<organism>
    <name type="scientific">Bacillus pumilus (strain SAFR-032)</name>
    <dbReference type="NCBI Taxonomy" id="315750"/>
    <lineage>
        <taxon>Bacteria</taxon>
        <taxon>Bacillati</taxon>
        <taxon>Bacillota</taxon>
        <taxon>Bacilli</taxon>
        <taxon>Bacillales</taxon>
        <taxon>Bacillaceae</taxon>
        <taxon>Bacillus</taxon>
    </lineage>
</organism>
<sequence length="558" mass="59704">MAELRSNMIKQGIDRAPHRSLLRAAGVKDEDFGKPFIAVCNSYIDIVPGHVHLQEFGKIVKEAIREAGGVPFEFNTIGVDDGIAMGHIGMRYSLPSREIIADSVETVVSAHWFDGMVCIPNCDKITPGMMMAAMRVNIPTVFVSGGPMEAGRTSDGRKISLSSVFEGVGAYQSGKINEEELNELEQFGCPTCGSCSGMFTANSMNCLAEALGIALPGNGTILATSPERREFAKKSAKQLMELIKKDIKPRDIVTEKAIDNAFALDMALGGSTNTVLHTLAIANEAGVEYSLERINEVAERVPHLSKLAPASDVYIEDLHEAGGVTAALNELSKKEGALHLDTMTVTAKTLGENIAGHEVKDYNVIYPIDKPFTEKGGLAVLFGNLAPDGAIIKTGGVQDGITRHEGPAIVFESQEEALEGIINRKVEAGHVVIIRYEGPKGGPGMPEMLAPTSQIVGMGLGPKVALITDGRFSGASRGLSIGHVSPEAAEGGPLAFVENGDHVVVDIEQRILSVDVPEEEWEKRKANWKGFEPKVKTGYLARYSKLVTSANTGGIMKI</sequence>
<name>ILVD_BACP2</name>
<reference key="1">
    <citation type="journal article" date="2007" name="PLoS ONE">
        <title>Paradoxical DNA repair and peroxide resistance gene conservation in Bacillus pumilus SAFR-032.</title>
        <authorList>
            <person name="Gioia J."/>
            <person name="Yerrapragada S."/>
            <person name="Qin X."/>
            <person name="Jiang H."/>
            <person name="Igboeli O.C."/>
            <person name="Muzny D."/>
            <person name="Dugan-Rocha S."/>
            <person name="Ding Y."/>
            <person name="Hawes A."/>
            <person name="Liu W."/>
            <person name="Perez L."/>
            <person name="Kovar C."/>
            <person name="Dinh H."/>
            <person name="Lee S."/>
            <person name="Nazareth L."/>
            <person name="Blyth P."/>
            <person name="Holder M."/>
            <person name="Buhay C."/>
            <person name="Tirumalai M.R."/>
            <person name="Liu Y."/>
            <person name="Dasgupta I."/>
            <person name="Bokhetache L."/>
            <person name="Fujita M."/>
            <person name="Karouia F."/>
            <person name="Eswara Moorthy P."/>
            <person name="Siefert J."/>
            <person name="Uzman A."/>
            <person name="Buzumbo P."/>
            <person name="Verma A."/>
            <person name="Zwiya H."/>
            <person name="McWilliams B.D."/>
            <person name="Olowu A."/>
            <person name="Clinkenbeard K.D."/>
            <person name="Newcombe D."/>
            <person name="Golebiewski L."/>
            <person name="Petrosino J.F."/>
            <person name="Nicholson W.L."/>
            <person name="Fox G.E."/>
            <person name="Venkateswaran K."/>
            <person name="Highlander S.K."/>
            <person name="Weinstock G.M."/>
        </authorList>
    </citation>
    <scope>NUCLEOTIDE SEQUENCE [LARGE SCALE GENOMIC DNA]</scope>
    <source>
        <strain>SAFR-032</strain>
    </source>
</reference>
<keyword id="KW-0001">2Fe-2S</keyword>
<keyword id="KW-0028">Amino-acid biosynthesis</keyword>
<keyword id="KW-0100">Branched-chain amino acid biosynthesis</keyword>
<keyword id="KW-0408">Iron</keyword>
<keyword id="KW-0411">Iron-sulfur</keyword>
<keyword id="KW-0456">Lyase</keyword>
<keyword id="KW-0460">Magnesium</keyword>
<keyword id="KW-0479">Metal-binding</keyword>